<dbReference type="EC" id="4.1.99.17" evidence="1"/>
<dbReference type="EMBL" id="CP000868">
    <property type="protein sequence ID" value="ABX15766.1"/>
    <property type="molecule type" value="Genomic_DNA"/>
</dbReference>
<dbReference type="EMBL" id="AP009385">
    <property type="protein sequence ID" value="BAG43103.1"/>
    <property type="molecule type" value="Genomic_DNA"/>
</dbReference>
<dbReference type="RefSeq" id="WP_006401164.1">
    <property type="nucleotide sequence ID" value="NC_010804.1"/>
</dbReference>
<dbReference type="SMR" id="A9ACX9"/>
<dbReference type="STRING" id="395019.BMULJ_01163"/>
<dbReference type="KEGG" id="bmj:BMULJ_01163"/>
<dbReference type="KEGG" id="bmu:Bmul_2081"/>
<dbReference type="eggNOG" id="COG0422">
    <property type="taxonomic scope" value="Bacteria"/>
</dbReference>
<dbReference type="HOGENOM" id="CLU_013181_2_1_4"/>
<dbReference type="UniPathway" id="UPA00060"/>
<dbReference type="Proteomes" id="UP000008815">
    <property type="component" value="Chromosome 1"/>
</dbReference>
<dbReference type="GO" id="GO:0005829">
    <property type="term" value="C:cytosol"/>
    <property type="evidence" value="ECO:0007669"/>
    <property type="project" value="TreeGrafter"/>
</dbReference>
<dbReference type="GO" id="GO:0051539">
    <property type="term" value="F:4 iron, 4 sulfur cluster binding"/>
    <property type="evidence" value="ECO:0007669"/>
    <property type="project" value="UniProtKB-KW"/>
</dbReference>
<dbReference type="GO" id="GO:0016830">
    <property type="term" value="F:carbon-carbon lyase activity"/>
    <property type="evidence" value="ECO:0007669"/>
    <property type="project" value="InterPro"/>
</dbReference>
<dbReference type="GO" id="GO:0008270">
    <property type="term" value="F:zinc ion binding"/>
    <property type="evidence" value="ECO:0007669"/>
    <property type="project" value="UniProtKB-UniRule"/>
</dbReference>
<dbReference type="GO" id="GO:0009228">
    <property type="term" value="P:thiamine biosynthetic process"/>
    <property type="evidence" value="ECO:0007669"/>
    <property type="project" value="UniProtKB-KW"/>
</dbReference>
<dbReference type="GO" id="GO:0009229">
    <property type="term" value="P:thiamine diphosphate biosynthetic process"/>
    <property type="evidence" value="ECO:0007669"/>
    <property type="project" value="UniProtKB-UniRule"/>
</dbReference>
<dbReference type="FunFam" id="3.20.20.540:FF:000001">
    <property type="entry name" value="Phosphomethylpyrimidine synthase"/>
    <property type="match status" value="1"/>
</dbReference>
<dbReference type="Gene3D" id="6.10.250.620">
    <property type="match status" value="1"/>
</dbReference>
<dbReference type="Gene3D" id="3.20.20.540">
    <property type="entry name" value="Radical SAM ThiC family, central domain"/>
    <property type="match status" value="1"/>
</dbReference>
<dbReference type="HAMAP" id="MF_00089">
    <property type="entry name" value="ThiC"/>
    <property type="match status" value="1"/>
</dbReference>
<dbReference type="InterPro" id="IPR037509">
    <property type="entry name" value="ThiC"/>
</dbReference>
<dbReference type="InterPro" id="IPR025747">
    <property type="entry name" value="ThiC-associated_dom"/>
</dbReference>
<dbReference type="InterPro" id="IPR038521">
    <property type="entry name" value="ThiC/Bza_core_dom"/>
</dbReference>
<dbReference type="InterPro" id="IPR002817">
    <property type="entry name" value="ThiC/BzaA/B"/>
</dbReference>
<dbReference type="NCBIfam" id="NF006763">
    <property type="entry name" value="PRK09284.1"/>
    <property type="match status" value="1"/>
</dbReference>
<dbReference type="NCBIfam" id="NF009895">
    <property type="entry name" value="PRK13352.1"/>
    <property type="match status" value="1"/>
</dbReference>
<dbReference type="NCBIfam" id="TIGR00190">
    <property type="entry name" value="thiC"/>
    <property type="match status" value="1"/>
</dbReference>
<dbReference type="PANTHER" id="PTHR30557:SF1">
    <property type="entry name" value="PHOSPHOMETHYLPYRIMIDINE SYNTHASE, CHLOROPLASTIC"/>
    <property type="match status" value="1"/>
</dbReference>
<dbReference type="PANTHER" id="PTHR30557">
    <property type="entry name" value="THIAMINE BIOSYNTHESIS PROTEIN THIC"/>
    <property type="match status" value="1"/>
</dbReference>
<dbReference type="Pfam" id="PF13667">
    <property type="entry name" value="ThiC-associated"/>
    <property type="match status" value="1"/>
</dbReference>
<dbReference type="Pfam" id="PF01964">
    <property type="entry name" value="ThiC_Rad_SAM"/>
    <property type="match status" value="1"/>
</dbReference>
<dbReference type="SFLD" id="SFLDF00407">
    <property type="entry name" value="phosphomethylpyrimidine_syntha"/>
    <property type="match status" value="1"/>
</dbReference>
<dbReference type="SFLD" id="SFLDG01114">
    <property type="entry name" value="phosphomethylpyrimidine_syntha"/>
    <property type="match status" value="1"/>
</dbReference>
<dbReference type="SFLD" id="SFLDS00113">
    <property type="entry name" value="Radical_SAM_Phosphomethylpyrim"/>
    <property type="match status" value="1"/>
</dbReference>
<name>THIC_BURM1</name>
<sequence>MNANPKFLSADAHVDAAAVAPLPNSRKVYVTGSQPDIRVPMREITQADTPTGFGGEKNPPIYVYDTSGPYTDPDAKIDIRAGLPALRQRWIEARGDTETLPGLSSQYGRERAADPATADLRFPGLHRNPRRARAGKNVTQMHYARQGIITPEMEFIAIRENQRRAEYLESLKASGPNGAKLAAMMGRQHPGQAFGAAAFGGNAPSEITPEFVRDEVARGRAIIPANINHPESEPMIIGRNFLVKINANIGNSAVTSSIGEEVDKMTWAIRWGGDTVMDLSTGKHIHETREWIIRNSPVPIGTVPIYQALEKVNGKAEELTWEIFRDTLIEQAEQGVDYFTIHAGVRLQYVPLTANRMTGIVSRGGSIMAKWCLAHHKESFLYEHFEEICEIMKAYDVSFSLGDGLRPGSIYDANDEAQLGELKTLGELTQIAWKHDVQVMIEGPGHVPMQLIKENMDLQLDWCKEAPFYTLGPLTTDIAPGYDHITSGIGAAMIGWFGTAMLCYVTPKEHLGLPNKDDVKEGIITYKLAAHAADLAKGHPGAQVRDNALSKARFEFRWEDQFNLGLDPDKAREFHDETLPKDSAKVAHFCSMCGPHFCSMKITQDVREFAAQQGVSEADALQKGMEVKAVEFVKSGSEIYHRQ</sequence>
<accession>A9ACX9</accession>
<keyword id="KW-0004">4Fe-4S</keyword>
<keyword id="KW-0408">Iron</keyword>
<keyword id="KW-0411">Iron-sulfur</keyword>
<keyword id="KW-0456">Lyase</keyword>
<keyword id="KW-0479">Metal-binding</keyword>
<keyword id="KW-1185">Reference proteome</keyword>
<keyword id="KW-0949">S-adenosyl-L-methionine</keyword>
<keyword id="KW-0784">Thiamine biosynthesis</keyword>
<keyword id="KW-0862">Zinc</keyword>
<protein>
    <recommendedName>
        <fullName evidence="1">Phosphomethylpyrimidine synthase</fullName>
        <ecNumber evidence="1">4.1.99.17</ecNumber>
    </recommendedName>
    <alternativeName>
        <fullName evidence="1">Hydroxymethylpyrimidine phosphate synthase</fullName>
        <shortName evidence="1">HMP-P synthase</shortName>
        <shortName evidence="1">HMP-phosphate synthase</shortName>
        <shortName evidence="1">HMPP synthase</shortName>
    </alternativeName>
    <alternativeName>
        <fullName evidence="1">Thiamine biosynthesis protein ThiC</fullName>
    </alternativeName>
</protein>
<reference key="1">
    <citation type="submission" date="2007-10" db="EMBL/GenBank/DDBJ databases">
        <title>Complete sequence of chromosome 1 of Burkholderia multivorans ATCC 17616.</title>
        <authorList>
            <person name="Copeland A."/>
            <person name="Lucas S."/>
            <person name="Lapidus A."/>
            <person name="Barry K."/>
            <person name="Glavina del Rio T."/>
            <person name="Dalin E."/>
            <person name="Tice H."/>
            <person name="Pitluck S."/>
            <person name="Chain P."/>
            <person name="Malfatti S."/>
            <person name="Shin M."/>
            <person name="Vergez L."/>
            <person name="Schmutz J."/>
            <person name="Larimer F."/>
            <person name="Land M."/>
            <person name="Hauser L."/>
            <person name="Kyrpides N."/>
            <person name="Kim E."/>
            <person name="Tiedje J."/>
            <person name="Richardson P."/>
        </authorList>
    </citation>
    <scope>NUCLEOTIDE SEQUENCE [LARGE SCALE GENOMIC DNA]</scope>
    <source>
        <strain>ATCC 17616 / 249</strain>
    </source>
</reference>
<reference key="2">
    <citation type="submission" date="2007-04" db="EMBL/GenBank/DDBJ databases">
        <title>Complete genome sequence of Burkholderia multivorans ATCC 17616.</title>
        <authorList>
            <person name="Ohtsubo Y."/>
            <person name="Yamashita A."/>
            <person name="Kurokawa K."/>
            <person name="Takami H."/>
            <person name="Yuhara S."/>
            <person name="Nishiyama E."/>
            <person name="Endo R."/>
            <person name="Miyazaki R."/>
            <person name="Ono A."/>
            <person name="Yano K."/>
            <person name="Ito M."/>
            <person name="Sota M."/>
            <person name="Yuji N."/>
            <person name="Hattori M."/>
            <person name="Tsuda M."/>
        </authorList>
    </citation>
    <scope>NUCLEOTIDE SEQUENCE [LARGE SCALE GENOMIC DNA]</scope>
    <source>
        <strain>ATCC 17616 / 249</strain>
    </source>
</reference>
<comment type="function">
    <text evidence="1">Catalyzes the synthesis of the hydroxymethylpyrimidine phosphate (HMP-P) moiety of thiamine from aminoimidazole ribotide (AIR) in a radical S-adenosyl-L-methionine (SAM)-dependent reaction.</text>
</comment>
<comment type="catalytic activity">
    <reaction evidence="1">
        <text>5-amino-1-(5-phospho-beta-D-ribosyl)imidazole + S-adenosyl-L-methionine = 4-amino-2-methyl-5-(phosphooxymethyl)pyrimidine + CO + 5'-deoxyadenosine + formate + L-methionine + 3 H(+)</text>
        <dbReference type="Rhea" id="RHEA:24840"/>
        <dbReference type="ChEBI" id="CHEBI:15378"/>
        <dbReference type="ChEBI" id="CHEBI:15740"/>
        <dbReference type="ChEBI" id="CHEBI:17245"/>
        <dbReference type="ChEBI" id="CHEBI:17319"/>
        <dbReference type="ChEBI" id="CHEBI:57844"/>
        <dbReference type="ChEBI" id="CHEBI:58354"/>
        <dbReference type="ChEBI" id="CHEBI:59789"/>
        <dbReference type="ChEBI" id="CHEBI:137981"/>
        <dbReference type="EC" id="4.1.99.17"/>
    </reaction>
</comment>
<comment type="cofactor">
    <cofactor evidence="1">
        <name>[4Fe-4S] cluster</name>
        <dbReference type="ChEBI" id="CHEBI:49883"/>
    </cofactor>
    <text evidence="1">Binds 1 [4Fe-4S] cluster per subunit. The cluster is coordinated with 3 cysteines and an exchangeable S-adenosyl-L-methionine.</text>
</comment>
<comment type="pathway">
    <text evidence="1">Cofactor biosynthesis; thiamine diphosphate biosynthesis.</text>
</comment>
<comment type="subunit">
    <text evidence="1">Homodimer.</text>
</comment>
<comment type="similarity">
    <text evidence="1">Belongs to the ThiC family.</text>
</comment>
<organism>
    <name type="scientific">Burkholderia multivorans (strain ATCC 17616 / 249)</name>
    <dbReference type="NCBI Taxonomy" id="395019"/>
    <lineage>
        <taxon>Bacteria</taxon>
        <taxon>Pseudomonadati</taxon>
        <taxon>Pseudomonadota</taxon>
        <taxon>Betaproteobacteria</taxon>
        <taxon>Burkholderiales</taxon>
        <taxon>Burkholderiaceae</taxon>
        <taxon>Burkholderia</taxon>
        <taxon>Burkholderia cepacia complex</taxon>
    </lineage>
</organism>
<evidence type="ECO:0000255" key="1">
    <source>
        <dbReference type="HAMAP-Rule" id="MF_00089"/>
    </source>
</evidence>
<feature type="chain" id="PRO_1000093194" description="Phosphomethylpyrimidine synthase">
    <location>
        <begin position="1"/>
        <end position="643"/>
    </location>
</feature>
<feature type="binding site" evidence="1">
    <location>
        <position position="248"/>
    </location>
    <ligand>
        <name>substrate</name>
    </ligand>
</feature>
<feature type="binding site" evidence="1">
    <location>
        <position position="277"/>
    </location>
    <ligand>
        <name>substrate</name>
    </ligand>
</feature>
<feature type="binding site" evidence="1">
    <location>
        <position position="306"/>
    </location>
    <ligand>
        <name>substrate</name>
    </ligand>
</feature>
<feature type="binding site" evidence="1">
    <location>
        <position position="342"/>
    </location>
    <ligand>
        <name>substrate</name>
    </ligand>
</feature>
<feature type="binding site" evidence="1">
    <location>
        <begin position="362"/>
        <end position="364"/>
    </location>
    <ligand>
        <name>substrate</name>
    </ligand>
</feature>
<feature type="binding site" evidence="1">
    <location>
        <begin position="403"/>
        <end position="406"/>
    </location>
    <ligand>
        <name>substrate</name>
    </ligand>
</feature>
<feature type="binding site" evidence="1">
    <location>
        <position position="442"/>
    </location>
    <ligand>
        <name>substrate</name>
    </ligand>
</feature>
<feature type="binding site" evidence="1">
    <location>
        <position position="446"/>
    </location>
    <ligand>
        <name>Zn(2+)</name>
        <dbReference type="ChEBI" id="CHEBI:29105"/>
    </ligand>
</feature>
<feature type="binding site" evidence="1">
    <location>
        <position position="469"/>
    </location>
    <ligand>
        <name>substrate</name>
    </ligand>
</feature>
<feature type="binding site" evidence="1">
    <location>
        <position position="510"/>
    </location>
    <ligand>
        <name>Zn(2+)</name>
        <dbReference type="ChEBI" id="CHEBI:29105"/>
    </ligand>
</feature>
<feature type="binding site" evidence="1">
    <location>
        <position position="590"/>
    </location>
    <ligand>
        <name>[4Fe-4S] cluster</name>
        <dbReference type="ChEBI" id="CHEBI:49883"/>
        <note>4Fe-4S-S-AdoMet</note>
    </ligand>
</feature>
<feature type="binding site" evidence="1">
    <location>
        <position position="593"/>
    </location>
    <ligand>
        <name>[4Fe-4S] cluster</name>
        <dbReference type="ChEBI" id="CHEBI:49883"/>
        <note>4Fe-4S-S-AdoMet</note>
    </ligand>
</feature>
<feature type="binding site" evidence="1">
    <location>
        <position position="598"/>
    </location>
    <ligand>
        <name>[4Fe-4S] cluster</name>
        <dbReference type="ChEBI" id="CHEBI:49883"/>
        <note>4Fe-4S-S-AdoMet</note>
    </ligand>
</feature>
<proteinExistence type="inferred from homology"/>
<gene>
    <name evidence="1" type="primary">thiC</name>
    <name type="ordered locus">Bmul_2081</name>
    <name type="ordered locus">BMULJ_01163</name>
</gene>